<protein>
    <recommendedName>
        <fullName>Uncharacterized protein PM1583</fullName>
    </recommendedName>
</protein>
<reference key="1">
    <citation type="journal article" date="2001" name="Proc. Natl. Acad. Sci. U.S.A.">
        <title>Complete genomic sequence of Pasteurella multocida Pm70.</title>
        <authorList>
            <person name="May B.J."/>
            <person name="Zhang Q."/>
            <person name="Li L.L."/>
            <person name="Paustian M.L."/>
            <person name="Whittam T.S."/>
            <person name="Kapur V."/>
        </authorList>
    </citation>
    <scope>NUCLEOTIDE SEQUENCE [LARGE SCALE GENOMIC DNA]</scope>
    <source>
        <strain>Pm70</strain>
    </source>
</reference>
<dbReference type="EMBL" id="AE004439">
    <property type="protein sequence ID" value="AAK03667.1"/>
    <property type="molecule type" value="Genomic_DNA"/>
</dbReference>
<dbReference type="RefSeq" id="WP_005724427.1">
    <property type="nucleotide sequence ID" value="NC_002663.1"/>
</dbReference>
<dbReference type="EnsemblBacteria" id="AAK03667">
    <property type="protein sequence ID" value="AAK03667"/>
    <property type="gene ID" value="PM1583"/>
</dbReference>
<dbReference type="KEGG" id="pmu:PM1583"/>
<dbReference type="PATRIC" id="fig|272843.6.peg.1602"/>
<dbReference type="HOGENOM" id="CLU_1342197_0_0_6"/>
<dbReference type="OrthoDB" id="5678011at2"/>
<dbReference type="Proteomes" id="UP000000809">
    <property type="component" value="Chromosome"/>
</dbReference>
<feature type="signal peptide" evidence="1">
    <location>
        <begin position="1"/>
        <end position="24"/>
    </location>
</feature>
<feature type="chain" id="PRO_0000014185" description="Uncharacterized protein PM1583">
    <location>
        <begin position="25"/>
        <end position="204"/>
    </location>
</feature>
<gene>
    <name type="ordered locus">PM1583</name>
</gene>
<organism>
    <name type="scientific">Pasteurella multocida (strain Pm70)</name>
    <dbReference type="NCBI Taxonomy" id="272843"/>
    <lineage>
        <taxon>Bacteria</taxon>
        <taxon>Pseudomonadati</taxon>
        <taxon>Pseudomonadota</taxon>
        <taxon>Gammaproteobacteria</taxon>
        <taxon>Pasteurellales</taxon>
        <taxon>Pasteurellaceae</taxon>
        <taxon>Pasteurella</taxon>
    </lineage>
</organism>
<proteinExistence type="inferred from homology"/>
<keyword id="KW-1185">Reference proteome</keyword>
<keyword id="KW-0732">Signal</keyword>
<accession>Q9CKM8</accession>
<name>Y1583_PASMU</name>
<sequence>MPINTFCKISLFICALFCSTVTLANPNVYVEGPSIENVMRASSYVSYTYRTEAKRHQWVGNDDLFFIRLSSIDTFGDQRSALIASLSPHSYSIERVSTNCKTKDTIINTRTRYDVNGKVLESNKEEEKIGRPIPDSYLAEAVIVMCDALAIIPANPNVDGEKITASAPFMNVINEHVRAKGVTRRAITVEQIEAHFKTTLNQRK</sequence>
<evidence type="ECO:0000255" key="1"/>